<dbReference type="EMBL" id="CP001339">
    <property type="protein sequence ID" value="ACL73315.1"/>
    <property type="molecule type" value="Genomic_DNA"/>
</dbReference>
<dbReference type="RefSeq" id="WP_012638791.1">
    <property type="nucleotide sequence ID" value="NC_011901.1"/>
</dbReference>
<dbReference type="SMR" id="B8GUJ5"/>
<dbReference type="STRING" id="396588.Tgr7_2235"/>
<dbReference type="KEGG" id="tgr:Tgr7_2235"/>
<dbReference type="eggNOG" id="COG0632">
    <property type="taxonomic scope" value="Bacteria"/>
</dbReference>
<dbReference type="HOGENOM" id="CLU_087936_0_0_6"/>
<dbReference type="OrthoDB" id="5293449at2"/>
<dbReference type="Proteomes" id="UP000002383">
    <property type="component" value="Chromosome"/>
</dbReference>
<dbReference type="GO" id="GO:0005737">
    <property type="term" value="C:cytoplasm"/>
    <property type="evidence" value="ECO:0007669"/>
    <property type="project" value="UniProtKB-SubCell"/>
</dbReference>
<dbReference type="GO" id="GO:0009379">
    <property type="term" value="C:Holliday junction helicase complex"/>
    <property type="evidence" value="ECO:0007669"/>
    <property type="project" value="InterPro"/>
</dbReference>
<dbReference type="GO" id="GO:0048476">
    <property type="term" value="C:Holliday junction resolvase complex"/>
    <property type="evidence" value="ECO:0007669"/>
    <property type="project" value="UniProtKB-UniRule"/>
</dbReference>
<dbReference type="GO" id="GO:0005524">
    <property type="term" value="F:ATP binding"/>
    <property type="evidence" value="ECO:0007669"/>
    <property type="project" value="InterPro"/>
</dbReference>
<dbReference type="GO" id="GO:0000400">
    <property type="term" value="F:four-way junction DNA binding"/>
    <property type="evidence" value="ECO:0007669"/>
    <property type="project" value="UniProtKB-UniRule"/>
</dbReference>
<dbReference type="GO" id="GO:0009378">
    <property type="term" value="F:four-way junction helicase activity"/>
    <property type="evidence" value="ECO:0007669"/>
    <property type="project" value="InterPro"/>
</dbReference>
<dbReference type="GO" id="GO:0006310">
    <property type="term" value="P:DNA recombination"/>
    <property type="evidence" value="ECO:0007669"/>
    <property type="project" value="UniProtKB-UniRule"/>
</dbReference>
<dbReference type="GO" id="GO:0006281">
    <property type="term" value="P:DNA repair"/>
    <property type="evidence" value="ECO:0007669"/>
    <property type="project" value="UniProtKB-UniRule"/>
</dbReference>
<dbReference type="CDD" id="cd14332">
    <property type="entry name" value="UBA_RuvA_C"/>
    <property type="match status" value="1"/>
</dbReference>
<dbReference type="Gene3D" id="1.10.150.20">
    <property type="entry name" value="5' to 3' exonuclease, C-terminal subdomain"/>
    <property type="match status" value="1"/>
</dbReference>
<dbReference type="Gene3D" id="1.10.8.10">
    <property type="entry name" value="DNA helicase RuvA subunit, C-terminal domain"/>
    <property type="match status" value="1"/>
</dbReference>
<dbReference type="Gene3D" id="2.40.50.140">
    <property type="entry name" value="Nucleic acid-binding proteins"/>
    <property type="match status" value="1"/>
</dbReference>
<dbReference type="HAMAP" id="MF_00031">
    <property type="entry name" value="DNA_HJ_migration_RuvA"/>
    <property type="match status" value="1"/>
</dbReference>
<dbReference type="InterPro" id="IPR013849">
    <property type="entry name" value="DNA_helicase_Holl-junc_RuvA_I"/>
</dbReference>
<dbReference type="InterPro" id="IPR003583">
    <property type="entry name" value="Hlx-hairpin-Hlx_DNA-bd_motif"/>
</dbReference>
<dbReference type="InterPro" id="IPR012340">
    <property type="entry name" value="NA-bd_OB-fold"/>
</dbReference>
<dbReference type="InterPro" id="IPR000085">
    <property type="entry name" value="RuvA"/>
</dbReference>
<dbReference type="InterPro" id="IPR010994">
    <property type="entry name" value="RuvA_2-like"/>
</dbReference>
<dbReference type="InterPro" id="IPR011114">
    <property type="entry name" value="RuvA_C"/>
</dbReference>
<dbReference type="InterPro" id="IPR036267">
    <property type="entry name" value="RuvA_C_sf"/>
</dbReference>
<dbReference type="NCBIfam" id="TIGR00084">
    <property type="entry name" value="ruvA"/>
    <property type="match status" value="1"/>
</dbReference>
<dbReference type="Pfam" id="PF14520">
    <property type="entry name" value="HHH_5"/>
    <property type="match status" value="1"/>
</dbReference>
<dbReference type="Pfam" id="PF07499">
    <property type="entry name" value="RuvA_C"/>
    <property type="match status" value="1"/>
</dbReference>
<dbReference type="Pfam" id="PF01330">
    <property type="entry name" value="RuvA_N"/>
    <property type="match status" value="1"/>
</dbReference>
<dbReference type="SMART" id="SM00278">
    <property type="entry name" value="HhH1"/>
    <property type="match status" value="2"/>
</dbReference>
<dbReference type="SUPFAM" id="SSF46929">
    <property type="entry name" value="DNA helicase RuvA subunit, C-terminal domain"/>
    <property type="match status" value="1"/>
</dbReference>
<dbReference type="SUPFAM" id="SSF50249">
    <property type="entry name" value="Nucleic acid-binding proteins"/>
    <property type="match status" value="1"/>
</dbReference>
<dbReference type="SUPFAM" id="SSF47781">
    <property type="entry name" value="RuvA domain 2-like"/>
    <property type="match status" value="1"/>
</dbReference>
<feature type="chain" id="PRO_1000195180" description="Holliday junction branch migration complex subunit RuvA">
    <location>
        <begin position="1"/>
        <end position="201"/>
    </location>
</feature>
<feature type="region of interest" description="Domain I" evidence="1">
    <location>
        <begin position="1"/>
        <end position="64"/>
    </location>
</feature>
<feature type="region of interest" description="Domain II" evidence="1">
    <location>
        <begin position="65"/>
        <end position="143"/>
    </location>
</feature>
<feature type="region of interest" description="Flexible linker" evidence="1">
    <location>
        <begin position="144"/>
        <end position="153"/>
    </location>
</feature>
<feature type="region of interest" description="Domain III" evidence="1">
    <location>
        <begin position="153"/>
        <end position="201"/>
    </location>
</feature>
<sequence length="201" mass="21375">MIGRLRGELVSKQPPFLLLDVQGVGYEIEAPLSTFYDLPEPGGQVTLHTHLHVREDAHVLYGFASESERALFRSLIKVTGVGAKMALAILSGMTASEFSRCVMDGDVASLVRLPGIGRKTAERLVVEMRDRLGSLPAAVTLTGGKPAAAAARAPDPVSDAVSALVSLGYKPQEASRLISAVEGEAERSEDLIRLALKATLK</sequence>
<comment type="function">
    <text evidence="1">The RuvA-RuvB-RuvC complex processes Holliday junction (HJ) DNA during genetic recombination and DNA repair, while the RuvA-RuvB complex plays an important role in the rescue of blocked DNA replication forks via replication fork reversal (RFR). RuvA specifically binds to HJ cruciform DNA, conferring on it an open structure. The RuvB hexamer acts as an ATP-dependent pump, pulling dsDNA into and through the RuvAB complex. HJ branch migration allows RuvC to scan DNA until it finds its consensus sequence, where it cleaves and resolves the cruciform DNA.</text>
</comment>
<comment type="subunit">
    <text evidence="1">Homotetramer. Forms an RuvA(8)-RuvB(12)-Holliday junction (HJ) complex. HJ DNA is sandwiched between 2 RuvA tetramers; dsDNA enters through RuvA and exits via RuvB. An RuvB hexamer assembles on each DNA strand where it exits the tetramer. Each RuvB hexamer is contacted by two RuvA subunits (via domain III) on 2 adjacent RuvB subunits; this complex drives branch migration. In the full resolvosome a probable DNA-RuvA(4)-RuvB(12)-RuvC(2) complex forms which resolves the HJ.</text>
</comment>
<comment type="subcellular location">
    <subcellularLocation>
        <location evidence="1">Cytoplasm</location>
    </subcellularLocation>
</comment>
<comment type="domain">
    <text evidence="1">Has three domains with a flexible linker between the domains II and III and assumes an 'L' shape. Domain III is highly mobile and contacts RuvB.</text>
</comment>
<comment type="similarity">
    <text evidence="1">Belongs to the RuvA family.</text>
</comment>
<name>RUVA_THISH</name>
<proteinExistence type="inferred from homology"/>
<keyword id="KW-0963">Cytoplasm</keyword>
<keyword id="KW-0227">DNA damage</keyword>
<keyword id="KW-0233">DNA recombination</keyword>
<keyword id="KW-0234">DNA repair</keyword>
<keyword id="KW-0238">DNA-binding</keyword>
<keyword id="KW-1185">Reference proteome</keyword>
<accession>B8GUJ5</accession>
<gene>
    <name evidence="1" type="primary">ruvA</name>
    <name type="ordered locus">Tgr7_2235</name>
</gene>
<organism>
    <name type="scientific">Thioalkalivibrio sulfidiphilus (strain HL-EbGR7)</name>
    <dbReference type="NCBI Taxonomy" id="396588"/>
    <lineage>
        <taxon>Bacteria</taxon>
        <taxon>Pseudomonadati</taxon>
        <taxon>Pseudomonadota</taxon>
        <taxon>Gammaproteobacteria</taxon>
        <taxon>Chromatiales</taxon>
        <taxon>Ectothiorhodospiraceae</taxon>
        <taxon>Thioalkalivibrio</taxon>
    </lineage>
</organism>
<evidence type="ECO:0000255" key="1">
    <source>
        <dbReference type="HAMAP-Rule" id="MF_00031"/>
    </source>
</evidence>
<protein>
    <recommendedName>
        <fullName evidence="1">Holliday junction branch migration complex subunit RuvA</fullName>
    </recommendedName>
</protein>
<reference key="1">
    <citation type="journal article" date="2011" name="Stand. Genomic Sci.">
        <title>Complete genome sequence of 'Thioalkalivibrio sulfidophilus' HL-EbGr7.</title>
        <authorList>
            <person name="Muyzer G."/>
            <person name="Sorokin D.Y."/>
            <person name="Mavromatis K."/>
            <person name="Lapidus A."/>
            <person name="Clum A."/>
            <person name="Ivanova N."/>
            <person name="Pati A."/>
            <person name="d'Haeseleer P."/>
            <person name="Woyke T."/>
            <person name="Kyrpides N.C."/>
        </authorList>
    </citation>
    <scope>NUCLEOTIDE SEQUENCE [LARGE SCALE GENOMIC DNA]</scope>
    <source>
        <strain>HL-EbGR7</strain>
    </source>
</reference>